<keyword id="KW-0997">Cell inner membrane</keyword>
<keyword id="KW-1003">Cell membrane</keyword>
<keyword id="KW-0143">Chaperone</keyword>
<keyword id="KW-0472">Membrane</keyword>
<keyword id="KW-0653">Protein transport</keyword>
<keyword id="KW-1185">Reference proteome</keyword>
<keyword id="KW-0812">Transmembrane</keyword>
<keyword id="KW-1133">Transmembrane helix</keyword>
<keyword id="KW-0813">Transport</keyword>
<reference key="1">
    <citation type="journal article" date="2005" name="Arch. Microbiol.">
        <title>The genome sequence of an anaerobic aromatic-degrading denitrifying bacterium, strain EbN1.</title>
        <authorList>
            <person name="Rabus R."/>
            <person name="Kube M."/>
            <person name="Heider J."/>
            <person name="Beck A."/>
            <person name="Heitmann K."/>
            <person name="Widdel F."/>
            <person name="Reinhardt R."/>
        </authorList>
    </citation>
    <scope>NUCLEOTIDE SEQUENCE [LARGE SCALE GENOMIC DNA]</scope>
    <source>
        <strain>DSM 19018 / LMG 30748 / EbN1</strain>
    </source>
</reference>
<protein>
    <recommendedName>
        <fullName evidence="1">Membrane protein insertase YidC</fullName>
    </recommendedName>
    <alternativeName>
        <fullName evidence="1">Foldase YidC</fullName>
    </alternativeName>
    <alternativeName>
        <fullName evidence="1">Membrane integrase YidC</fullName>
    </alternativeName>
    <alternativeName>
        <fullName evidence="1">Membrane protein YidC</fullName>
    </alternativeName>
</protein>
<name>YIDC_AROAE</name>
<sequence length="550" mass="60705">MDQRRLVLFLVFSLSLVMLWNAWLKQSQPAPTAVTATAGVEGAGVPTPTTGVAPGATTAVPGVPGAATASTAPRMVVRTDLMVAEVSAQGGDIVRLELAQHKATADKTKNFVLFDDGTIHLYAAQSGLIGEDLPTHKTTFALPQGEQVLKEGEDRLVVRLEAPEQDGVKVTKVMTFHRGNYLVDVAYEIVNSSERTLSPHAYYQLTRDGKPAESVEAFGVTTFTGPAFYTDAEKFQKVQFEEIAEGKAKFVKKASDGWIAMVQHYFVSAWLPQGGTEREFFAQKVGNDLYSAGVIVPVAAIQPGQSGRVEASLYAGPQEQDKLEDIAPGLDLVVDYGWLTVIAAPLFWVLSWIHGVVGNWGWAIIIVTILIKLMFFPLSAASYKSMAKMRVLGPRMQRLKELYGNDKAKMQQEMMEMYRKEKINPLGGCLPILVQIPVFISLYWVLLGSVEMRQAPWLGWIQDLSAKDPYFILPVIMGVSMLIQMKLNPTPPDPIQAKVMMAMPVIFTFMFLWFPSGLVLYWVVNNILSIAQQWQITRMIESEKSGAKPA</sequence>
<proteinExistence type="inferred from homology"/>
<evidence type="ECO:0000255" key="1">
    <source>
        <dbReference type="HAMAP-Rule" id="MF_01810"/>
    </source>
</evidence>
<comment type="function">
    <text evidence="1">Required for the insertion and/or proper folding and/or complex formation of integral membrane proteins into the membrane. Involved in integration of membrane proteins that insert both dependently and independently of the Sec translocase complex, as well as at least some lipoproteins. Aids folding of multispanning membrane proteins.</text>
</comment>
<comment type="subunit">
    <text evidence="1">Interacts with the Sec translocase complex via SecD. Specifically interacts with transmembrane segments of nascent integral membrane proteins during membrane integration.</text>
</comment>
<comment type="subcellular location">
    <subcellularLocation>
        <location evidence="1">Cell inner membrane</location>
        <topology evidence="1">Multi-pass membrane protein</topology>
    </subcellularLocation>
</comment>
<comment type="similarity">
    <text evidence="1">Belongs to the OXA1/ALB3/YidC family. Type 1 subfamily.</text>
</comment>
<gene>
    <name evidence="1" type="primary">yidC</name>
    <name type="ordered locus">AZOSEA15930</name>
    <name type="ORF">ebA2842</name>
</gene>
<organism>
    <name type="scientific">Aromatoleum aromaticum (strain DSM 19018 / LMG 30748 / EbN1)</name>
    <name type="common">Azoarcus sp. (strain EbN1)</name>
    <dbReference type="NCBI Taxonomy" id="76114"/>
    <lineage>
        <taxon>Bacteria</taxon>
        <taxon>Pseudomonadati</taxon>
        <taxon>Pseudomonadota</taxon>
        <taxon>Betaproteobacteria</taxon>
        <taxon>Rhodocyclales</taxon>
        <taxon>Rhodocyclaceae</taxon>
        <taxon>Aromatoleum</taxon>
    </lineage>
</organism>
<dbReference type="EMBL" id="CR555306">
    <property type="protein sequence ID" value="CAI07718.1"/>
    <property type="molecule type" value="Genomic_DNA"/>
</dbReference>
<dbReference type="RefSeq" id="WP_011237433.1">
    <property type="nucleotide sequence ID" value="NC_006513.1"/>
</dbReference>
<dbReference type="SMR" id="Q5P4P4"/>
<dbReference type="STRING" id="76114.ebA2842"/>
<dbReference type="KEGG" id="eba:ebA2842"/>
<dbReference type="eggNOG" id="COG0706">
    <property type="taxonomic scope" value="Bacteria"/>
</dbReference>
<dbReference type="HOGENOM" id="CLU_016535_3_0_4"/>
<dbReference type="OrthoDB" id="9780552at2"/>
<dbReference type="Proteomes" id="UP000006552">
    <property type="component" value="Chromosome"/>
</dbReference>
<dbReference type="GO" id="GO:0005886">
    <property type="term" value="C:plasma membrane"/>
    <property type="evidence" value="ECO:0007669"/>
    <property type="project" value="UniProtKB-SubCell"/>
</dbReference>
<dbReference type="GO" id="GO:0032977">
    <property type="term" value="F:membrane insertase activity"/>
    <property type="evidence" value="ECO:0007669"/>
    <property type="project" value="InterPro"/>
</dbReference>
<dbReference type="GO" id="GO:0051205">
    <property type="term" value="P:protein insertion into membrane"/>
    <property type="evidence" value="ECO:0007669"/>
    <property type="project" value="TreeGrafter"/>
</dbReference>
<dbReference type="GO" id="GO:0015031">
    <property type="term" value="P:protein transport"/>
    <property type="evidence" value="ECO:0007669"/>
    <property type="project" value="UniProtKB-KW"/>
</dbReference>
<dbReference type="CDD" id="cd20070">
    <property type="entry name" value="5TM_YidC_Alb3"/>
    <property type="match status" value="1"/>
</dbReference>
<dbReference type="CDD" id="cd19961">
    <property type="entry name" value="EcYidC-like_peri"/>
    <property type="match status" value="1"/>
</dbReference>
<dbReference type="Gene3D" id="2.70.98.90">
    <property type="match status" value="1"/>
</dbReference>
<dbReference type="HAMAP" id="MF_01810">
    <property type="entry name" value="YidC_type1"/>
    <property type="match status" value="1"/>
</dbReference>
<dbReference type="InterPro" id="IPR019998">
    <property type="entry name" value="Membr_insert_YidC"/>
</dbReference>
<dbReference type="InterPro" id="IPR028053">
    <property type="entry name" value="Membr_insert_YidC_N"/>
</dbReference>
<dbReference type="InterPro" id="IPR001708">
    <property type="entry name" value="YidC/ALB3/OXA1/COX18"/>
</dbReference>
<dbReference type="InterPro" id="IPR028055">
    <property type="entry name" value="YidC/Oxa/ALB_C"/>
</dbReference>
<dbReference type="InterPro" id="IPR047196">
    <property type="entry name" value="YidC_ALB_C"/>
</dbReference>
<dbReference type="InterPro" id="IPR038221">
    <property type="entry name" value="YidC_periplasmic_sf"/>
</dbReference>
<dbReference type="NCBIfam" id="NF002352">
    <property type="entry name" value="PRK01318.1-3"/>
    <property type="match status" value="1"/>
</dbReference>
<dbReference type="NCBIfam" id="NF002353">
    <property type="entry name" value="PRK01318.1-4"/>
    <property type="match status" value="1"/>
</dbReference>
<dbReference type="NCBIfam" id="TIGR03593">
    <property type="entry name" value="yidC_nterm"/>
    <property type="match status" value="1"/>
</dbReference>
<dbReference type="NCBIfam" id="TIGR03592">
    <property type="entry name" value="yidC_oxa1_cterm"/>
    <property type="match status" value="1"/>
</dbReference>
<dbReference type="PANTHER" id="PTHR12428:SF65">
    <property type="entry name" value="CYTOCHROME C OXIDASE ASSEMBLY PROTEIN COX18, MITOCHONDRIAL"/>
    <property type="match status" value="1"/>
</dbReference>
<dbReference type="PANTHER" id="PTHR12428">
    <property type="entry name" value="OXA1"/>
    <property type="match status" value="1"/>
</dbReference>
<dbReference type="Pfam" id="PF02096">
    <property type="entry name" value="60KD_IMP"/>
    <property type="match status" value="1"/>
</dbReference>
<dbReference type="Pfam" id="PF14849">
    <property type="entry name" value="YidC_periplas"/>
    <property type="match status" value="1"/>
</dbReference>
<dbReference type="PRINTS" id="PR00701">
    <property type="entry name" value="60KDINNERMP"/>
</dbReference>
<dbReference type="PRINTS" id="PR01900">
    <property type="entry name" value="YIDCPROTEIN"/>
</dbReference>
<feature type="chain" id="PRO_1000070057" description="Membrane protein insertase YidC">
    <location>
        <begin position="1"/>
        <end position="550"/>
    </location>
</feature>
<feature type="transmembrane region" description="Helical" evidence="1">
    <location>
        <begin position="6"/>
        <end position="26"/>
    </location>
</feature>
<feature type="transmembrane region" description="Helical" evidence="1">
    <location>
        <begin position="333"/>
        <end position="353"/>
    </location>
</feature>
<feature type="transmembrane region" description="Helical" evidence="1">
    <location>
        <begin position="356"/>
        <end position="376"/>
    </location>
</feature>
<feature type="transmembrane region" description="Helical" evidence="1">
    <location>
        <begin position="430"/>
        <end position="450"/>
    </location>
</feature>
<feature type="transmembrane region" description="Helical" evidence="1">
    <location>
        <begin position="469"/>
        <end position="489"/>
    </location>
</feature>
<feature type="transmembrane region" description="Helical" evidence="1">
    <location>
        <begin position="504"/>
        <end position="524"/>
    </location>
</feature>
<accession>Q5P4P4</accession>